<sequence>MAKIQRVTEANLPTEFGMFRIVGFEFPDTKKEHVALVLGEVENTDEPILARIHSECLTGDALYSLKCDCGFQLAAALRQISQEGRGVLIYHREEGRGIGLINKIRAYSLQDKGMDTIEANLALGFAADERNFEVCADIFALLGINKVRLLTNNPNKIDTMKKAGINIVERVALNVGENRYNTEYLDTKAKKMGHFIIHNQQKYPLECPYCSEEVPVQEK</sequence>
<accession>P57863</accession>
<reference key="1">
    <citation type="journal article" date="2001" name="Proc. Natl. Acad. Sci. U.S.A.">
        <title>Complete genomic sequence of Pasteurella multocida Pm70.</title>
        <authorList>
            <person name="May B.J."/>
            <person name="Zhang Q."/>
            <person name="Li L.L."/>
            <person name="Paustian M.L."/>
            <person name="Whittam T.S."/>
            <person name="Kapur V."/>
        </authorList>
    </citation>
    <scope>NUCLEOTIDE SEQUENCE [LARGE SCALE GENOMIC DNA]</scope>
    <source>
        <strain>Pm70</strain>
    </source>
</reference>
<name>RIBA_PASMU</name>
<keyword id="KW-0342">GTP-binding</keyword>
<keyword id="KW-0378">Hydrolase</keyword>
<keyword id="KW-0479">Metal-binding</keyword>
<keyword id="KW-0547">Nucleotide-binding</keyword>
<keyword id="KW-1185">Reference proteome</keyword>
<keyword id="KW-0686">Riboflavin biosynthesis</keyword>
<keyword id="KW-0862">Zinc</keyword>
<protein>
    <recommendedName>
        <fullName evidence="1">GTP cyclohydrolase-2</fullName>
        <ecNumber evidence="1">3.5.4.25</ecNumber>
    </recommendedName>
    <alternativeName>
        <fullName evidence="1">GTP cyclohydrolase II</fullName>
    </alternativeName>
</protein>
<gene>
    <name evidence="1" type="primary">ribA</name>
    <name type="ordered locus">PM0677</name>
</gene>
<evidence type="ECO:0000255" key="1">
    <source>
        <dbReference type="HAMAP-Rule" id="MF_00179"/>
    </source>
</evidence>
<organism>
    <name type="scientific">Pasteurella multocida (strain Pm70)</name>
    <dbReference type="NCBI Taxonomy" id="272843"/>
    <lineage>
        <taxon>Bacteria</taxon>
        <taxon>Pseudomonadati</taxon>
        <taxon>Pseudomonadota</taxon>
        <taxon>Gammaproteobacteria</taxon>
        <taxon>Pasteurellales</taxon>
        <taxon>Pasteurellaceae</taxon>
        <taxon>Pasteurella</taxon>
    </lineage>
</organism>
<dbReference type="EC" id="3.5.4.25" evidence="1"/>
<dbReference type="EMBL" id="AE004439">
    <property type="protein sequence ID" value="AAK02761.1"/>
    <property type="molecule type" value="Genomic_DNA"/>
</dbReference>
<dbReference type="RefSeq" id="WP_005716111.1">
    <property type="nucleotide sequence ID" value="NC_002663.1"/>
</dbReference>
<dbReference type="SMR" id="P57863"/>
<dbReference type="STRING" id="272843.PM0677"/>
<dbReference type="EnsemblBacteria" id="AAK02761">
    <property type="protein sequence ID" value="AAK02761"/>
    <property type="gene ID" value="PM0677"/>
</dbReference>
<dbReference type="GeneID" id="77207899"/>
<dbReference type="KEGG" id="pmu:PM0677"/>
<dbReference type="HOGENOM" id="CLU_020273_2_1_6"/>
<dbReference type="OrthoDB" id="9793111at2"/>
<dbReference type="UniPathway" id="UPA00275">
    <property type="reaction ID" value="UER00400"/>
</dbReference>
<dbReference type="Proteomes" id="UP000000809">
    <property type="component" value="Chromosome"/>
</dbReference>
<dbReference type="GO" id="GO:0005829">
    <property type="term" value="C:cytosol"/>
    <property type="evidence" value="ECO:0007669"/>
    <property type="project" value="TreeGrafter"/>
</dbReference>
<dbReference type="GO" id="GO:0005525">
    <property type="term" value="F:GTP binding"/>
    <property type="evidence" value="ECO:0007669"/>
    <property type="project" value="UniProtKB-KW"/>
</dbReference>
<dbReference type="GO" id="GO:0003935">
    <property type="term" value="F:GTP cyclohydrolase II activity"/>
    <property type="evidence" value="ECO:0007669"/>
    <property type="project" value="UniProtKB-UniRule"/>
</dbReference>
<dbReference type="GO" id="GO:0008270">
    <property type="term" value="F:zinc ion binding"/>
    <property type="evidence" value="ECO:0007669"/>
    <property type="project" value="UniProtKB-UniRule"/>
</dbReference>
<dbReference type="GO" id="GO:0009231">
    <property type="term" value="P:riboflavin biosynthetic process"/>
    <property type="evidence" value="ECO:0007669"/>
    <property type="project" value="UniProtKB-UniRule"/>
</dbReference>
<dbReference type="CDD" id="cd00641">
    <property type="entry name" value="GTP_cyclohydro2"/>
    <property type="match status" value="1"/>
</dbReference>
<dbReference type="FunFam" id="3.40.50.10990:FF:000002">
    <property type="entry name" value="GTP cyclohydrolase-2"/>
    <property type="match status" value="1"/>
</dbReference>
<dbReference type="Gene3D" id="3.40.50.10990">
    <property type="entry name" value="GTP cyclohydrolase II"/>
    <property type="match status" value="1"/>
</dbReference>
<dbReference type="HAMAP" id="MF_00179">
    <property type="entry name" value="RibA"/>
    <property type="match status" value="1"/>
</dbReference>
<dbReference type="InterPro" id="IPR032677">
    <property type="entry name" value="GTP_cyclohydro_II"/>
</dbReference>
<dbReference type="InterPro" id="IPR000926">
    <property type="entry name" value="RibA"/>
</dbReference>
<dbReference type="InterPro" id="IPR036144">
    <property type="entry name" value="RibA-like_sf"/>
</dbReference>
<dbReference type="NCBIfam" id="NF001591">
    <property type="entry name" value="PRK00393.1"/>
    <property type="match status" value="1"/>
</dbReference>
<dbReference type="NCBIfam" id="TIGR00505">
    <property type="entry name" value="ribA"/>
    <property type="match status" value="1"/>
</dbReference>
<dbReference type="PANTHER" id="PTHR21327:SF18">
    <property type="entry name" value="3,4-DIHYDROXY-2-BUTANONE 4-PHOSPHATE SYNTHASE"/>
    <property type="match status" value="1"/>
</dbReference>
<dbReference type="PANTHER" id="PTHR21327">
    <property type="entry name" value="GTP CYCLOHYDROLASE II-RELATED"/>
    <property type="match status" value="1"/>
</dbReference>
<dbReference type="Pfam" id="PF00925">
    <property type="entry name" value="GTP_cyclohydro2"/>
    <property type="match status" value="1"/>
</dbReference>
<dbReference type="SUPFAM" id="SSF142695">
    <property type="entry name" value="RibA-like"/>
    <property type="match status" value="1"/>
</dbReference>
<feature type="chain" id="PRO_0000151766" description="GTP cyclohydrolase-2">
    <location>
        <begin position="1"/>
        <end position="219"/>
    </location>
</feature>
<feature type="active site" description="Proton acceptor" evidence="1">
    <location>
        <position position="128"/>
    </location>
</feature>
<feature type="active site" description="Nucleophile" evidence="1">
    <location>
        <position position="130"/>
    </location>
</feature>
<feature type="binding site" evidence="1">
    <location>
        <begin position="51"/>
        <end position="55"/>
    </location>
    <ligand>
        <name>GTP</name>
        <dbReference type="ChEBI" id="CHEBI:37565"/>
    </ligand>
</feature>
<feature type="binding site" evidence="1">
    <location>
        <position position="56"/>
    </location>
    <ligand>
        <name>Zn(2+)</name>
        <dbReference type="ChEBI" id="CHEBI:29105"/>
        <note>catalytic</note>
    </ligand>
</feature>
<feature type="binding site" evidence="1">
    <location>
        <position position="67"/>
    </location>
    <ligand>
        <name>Zn(2+)</name>
        <dbReference type="ChEBI" id="CHEBI:29105"/>
        <note>catalytic</note>
    </ligand>
</feature>
<feature type="binding site" evidence="1">
    <location>
        <position position="69"/>
    </location>
    <ligand>
        <name>Zn(2+)</name>
        <dbReference type="ChEBI" id="CHEBI:29105"/>
        <note>catalytic</note>
    </ligand>
</feature>
<feature type="binding site" evidence="1">
    <location>
        <position position="72"/>
    </location>
    <ligand>
        <name>GTP</name>
        <dbReference type="ChEBI" id="CHEBI:37565"/>
    </ligand>
</feature>
<feature type="binding site" evidence="1">
    <location>
        <begin position="94"/>
        <end position="96"/>
    </location>
    <ligand>
        <name>GTP</name>
        <dbReference type="ChEBI" id="CHEBI:37565"/>
    </ligand>
</feature>
<feature type="binding site" evidence="1">
    <location>
        <position position="116"/>
    </location>
    <ligand>
        <name>GTP</name>
        <dbReference type="ChEBI" id="CHEBI:37565"/>
    </ligand>
</feature>
<feature type="binding site" evidence="1">
    <location>
        <position position="151"/>
    </location>
    <ligand>
        <name>GTP</name>
        <dbReference type="ChEBI" id="CHEBI:37565"/>
    </ligand>
</feature>
<feature type="binding site" evidence="1">
    <location>
        <position position="156"/>
    </location>
    <ligand>
        <name>GTP</name>
        <dbReference type="ChEBI" id="CHEBI:37565"/>
    </ligand>
</feature>
<comment type="function">
    <text evidence="1">Catalyzes the conversion of GTP to 2,5-diamino-6-ribosylamino-4(3H)-pyrimidinone 5'-phosphate (DARP), formate and pyrophosphate.</text>
</comment>
<comment type="catalytic activity">
    <reaction evidence="1">
        <text>GTP + 4 H2O = 2,5-diamino-6-hydroxy-4-(5-phosphoribosylamino)-pyrimidine + formate + 2 phosphate + 3 H(+)</text>
        <dbReference type="Rhea" id="RHEA:23704"/>
        <dbReference type="ChEBI" id="CHEBI:15377"/>
        <dbReference type="ChEBI" id="CHEBI:15378"/>
        <dbReference type="ChEBI" id="CHEBI:15740"/>
        <dbReference type="ChEBI" id="CHEBI:37565"/>
        <dbReference type="ChEBI" id="CHEBI:43474"/>
        <dbReference type="ChEBI" id="CHEBI:58614"/>
        <dbReference type="EC" id="3.5.4.25"/>
    </reaction>
</comment>
<comment type="cofactor">
    <cofactor evidence="1">
        <name>Zn(2+)</name>
        <dbReference type="ChEBI" id="CHEBI:29105"/>
    </cofactor>
    <text evidence="1">Binds 1 zinc ion per subunit.</text>
</comment>
<comment type="pathway">
    <text evidence="1">Cofactor biosynthesis; riboflavin biosynthesis; 5-amino-6-(D-ribitylamino)uracil from GTP: step 1/4.</text>
</comment>
<comment type="similarity">
    <text evidence="1">Belongs to the GTP cyclohydrolase II family.</text>
</comment>
<proteinExistence type="inferred from homology"/>